<feature type="chain" id="PRO_0000161525" description="tRNA uridine(34) hydroxylase">
    <location>
        <begin position="1"/>
        <end position="328"/>
    </location>
</feature>
<feature type="domain" description="Rhodanese" evidence="1">
    <location>
        <begin position="130"/>
        <end position="224"/>
    </location>
</feature>
<feature type="active site" description="Cysteine persulfide intermediate" evidence="1">
    <location>
        <position position="184"/>
    </location>
</feature>
<protein>
    <recommendedName>
        <fullName evidence="1">tRNA uridine(34) hydroxylase</fullName>
        <ecNumber evidence="1">1.14.-.-</ecNumber>
    </recommendedName>
    <alternativeName>
        <fullName evidence="1">tRNA hydroxylation protein O</fullName>
    </alternativeName>
</protein>
<comment type="function">
    <text evidence="1">Catalyzes oxygen-dependent 5-hydroxyuridine (ho5U) modification at position 34 in tRNAs.</text>
</comment>
<comment type="catalytic activity">
    <reaction evidence="1">
        <text>uridine(34) in tRNA + AH2 + O2 = 5-hydroxyuridine(34) in tRNA + A + H2O</text>
        <dbReference type="Rhea" id="RHEA:64224"/>
        <dbReference type="Rhea" id="RHEA-COMP:11727"/>
        <dbReference type="Rhea" id="RHEA-COMP:13381"/>
        <dbReference type="ChEBI" id="CHEBI:13193"/>
        <dbReference type="ChEBI" id="CHEBI:15377"/>
        <dbReference type="ChEBI" id="CHEBI:15379"/>
        <dbReference type="ChEBI" id="CHEBI:17499"/>
        <dbReference type="ChEBI" id="CHEBI:65315"/>
        <dbReference type="ChEBI" id="CHEBI:136877"/>
    </reaction>
</comment>
<comment type="similarity">
    <text evidence="1">Belongs to the TrhO family.</text>
</comment>
<keyword id="KW-0560">Oxidoreductase</keyword>
<keyword id="KW-1185">Reference proteome</keyword>
<keyword id="KW-0819">tRNA processing</keyword>
<reference key="1">
    <citation type="journal article" date="2001" name="Proc. Natl. Acad. Sci. U.S.A.">
        <title>Complete genome sequence of an M1 strain of Streptococcus pyogenes.</title>
        <authorList>
            <person name="Ferretti J.J."/>
            <person name="McShan W.M."/>
            <person name="Ajdic D.J."/>
            <person name="Savic D.J."/>
            <person name="Savic G."/>
            <person name="Lyon K."/>
            <person name="Primeaux C."/>
            <person name="Sezate S."/>
            <person name="Suvorov A.N."/>
            <person name="Kenton S."/>
            <person name="Lai H.S."/>
            <person name="Lin S.P."/>
            <person name="Qian Y."/>
            <person name="Jia H.G."/>
            <person name="Najar F.Z."/>
            <person name="Ren Q."/>
            <person name="Zhu H."/>
            <person name="Song L."/>
            <person name="White J."/>
            <person name="Yuan X."/>
            <person name="Clifton S.W."/>
            <person name="Roe B.A."/>
            <person name="McLaughlin R.E."/>
        </authorList>
    </citation>
    <scope>NUCLEOTIDE SEQUENCE [LARGE SCALE GENOMIC DNA]</scope>
    <source>
        <strain>ATCC 700294 / SF370 / Serotype M1</strain>
    </source>
</reference>
<reference key="2">
    <citation type="journal article" date="2005" name="J. Infect. Dis.">
        <title>Evolutionary origin and emergence of a highly successful clone of serotype M1 group A Streptococcus involved multiple horizontal gene transfer events.</title>
        <authorList>
            <person name="Sumby P."/>
            <person name="Porcella S.F."/>
            <person name="Madrigal A.G."/>
            <person name="Barbian K.D."/>
            <person name="Virtaneva K."/>
            <person name="Ricklefs S.M."/>
            <person name="Sturdevant D.E."/>
            <person name="Graham M.R."/>
            <person name="Vuopio-Varkila J."/>
            <person name="Hoe N.P."/>
            <person name="Musser J.M."/>
        </authorList>
    </citation>
    <scope>NUCLEOTIDE SEQUENCE [LARGE SCALE GENOMIC DNA]</scope>
    <source>
        <strain>ATCC BAA-947 / MGAS5005 / Serotype M1</strain>
    </source>
</reference>
<accession>P67332</accession>
<accession>Q48Z83</accession>
<accession>Q9A064</accession>
<organism>
    <name type="scientific">Streptococcus pyogenes serotype M1</name>
    <dbReference type="NCBI Taxonomy" id="301447"/>
    <lineage>
        <taxon>Bacteria</taxon>
        <taxon>Bacillati</taxon>
        <taxon>Bacillota</taxon>
        <taxon>Bacilli</taxon>
        <taxon>Lactobacillales</taxon>
        <taxon>Streptococcaceae</taxon>
        <taxon>Streptococcus</taxon>
    </lineage>
</organism>
<gene>
    <name evidence="1" type="primary">trhO</name>
    <name type="ordered locus">SPy_0915</name>
    <name type="ordered locus">M5005_Spy0717</name>
</gene>
<name>TRHO_STRP1</name>
<sequence length="328" mass="38213">MSEKIRVLLYYKYVSIENAQEYAAKHLEFCKSIGLKGRILIADEGINGTVSGDYETTQKYMDWVHSDERFADLWFKIDEENQQAFRKMFVRYKKEIVHLGLEDNNFDSDINPLETTGEYLNPKQFKEALLDEDTVVLDTRNDYEYDLGHFRGAIRPDIRNFRELPQWVRDNKDKFMEKRVVVYCTGGVRCEKFSGWMVREGFKDVGQLHGGIATYGKDPEVQGELWDGAMYVFDDRISVPINHVNPTVISKDYFDGTPCERYVNCANPFCNKQIFASEENETKYVRGCSPECRAHERNRYVQENGLSRQEWAERLEAIGESLPEFVGA</sequence>
<evidence type="ECO:0000255" key="1">
    <source>
        <dbReference type="HAMAP-Rule" id="MF_00469"/>
    </source>
</evidence>
<proteinExistence type="inferred from homology"/>
<dbReference type="EC" id="1.14.-.-" evidence="1"/>
<dbReference type="EMBL" id="AE004092">
    <property type="protein sequence ID" value="AAK33831.1"/>
    <property type="molecule type" value="Genomic_DNA"/>
</dbReference>
<dbReference type="EMBL" id="CP000017">
    <property type="protein sequence ID" value="AAZ51335.1"/>
    <property type="molecule type" value="Genomic_DNA"/>
</dbReference>
<dbReference type="RefSeq" id="NP_269110.1">
    <property type="nucleotide sequence ID" value="NC_002737.2"/>
</dbReference>
<dbReference type="SMR" id="P67332"/>
<dbReference type="PaxDb" id="1314-HKU360_00730"/>
<dbReference type="KEGG" id="spy:SPy_0915"/>
<dbReference type="KEGG" id="spz:M5005_Spy0717"/>
<dbReference type="PATRIC" id="fig|160490.10.peg.787"/>
<dbReference type="HOGENOM" id="CLU_038878_1_0_9"/>
<dbReference type="OMA" id="CDTHTNC"/>
<dbReference type="Proteomes" id="UP000000750">
    <property type="component" value="Chromosome"/>
</dbReference>
<dbReference type="GO" id="GO:0016705">
    <property type="term" value="F:oxidoreductase activity, acting on paired donors, with incorporation or reduction of molecular oxygen"/>
    <property type="evidence" value="ECO:0007669"/>
    <property type="project" value="UniProtKB-UniRule"/>
</dbReference>
<dbReference type="GO" id="GO:0006400">
    <property type="term" value="P:tRNA modification"/>
    <property type="evidence" value="ECO:0007669"/>
    <property type="project" value="UniProtKB-UniRule"/>
</dbReference>
<dbReference type="CDD" id="cd01518">
    <property type="entry name" value="RHOD_YceA"/>
    <property type="match status" value="1"/>
</dbReference>
<dbReference type="Gene3D" id="3.30.70.100">
    <property type="match status" value="1"/>
</dbReference>
<dbReference type="Gene3D" id="3.40.250.10">
    <property type="entry name" value="Rhodanese-like domain"/>
    <property type="match status" value="1"/>
</dbReference>
<dbReference type="HAMAP" id="MF_00469">
    <property type="entry name" value="TrhO"/>
    <property type="match status" value="1"/>
</dbReference>
<dbReference type="InterPro" id="IPR001763">
    <property type="entry name" value="Rhodanese-like_dom"/>
</dbReference>
<dbReference type="InterPro" id="IPR036873">
    <property type="entry name" value="Rhodanese-like_dom_sf"/>
</dbReference>
<dbReference type="InterPro" id="IPR022111">
    <property type="entry name" value="Rhodanese_C"/>
</dbReference>
<dbReference type="InterPro" id="IPR020936">
    <property type="entry name" value="TrhO"/>
</dbReference>
<dbReference type="InterPro" id="IPR040503">
    <property type="entry name" value="TRHO_N"/>
</dbReference>
<dbReference type="NCBIfam" id="NF001135">
    <property type="entry name" value="PRK00142.1-3"/>
    <property type="match status" value="1"/>
</dbReference>
<dbReference type="NCBIfam" id="NF001137">
    <property type="entry name" value="PRK00142.1-5"/>
    <property type="match status" value="1"/>
</dbReference>
<dbReference type="PANTHER" id="PTHR43268:SF3">
    <property type="entry name" value="RHODANESE-LIKE DOMAIN-CONTAINING PROTEIN 7-RELATED"/>
    <property type="match status" value="1"/>
</dbReference>
<dbReference type="PANTHER" id="PTHR43268">
    <property type="entry name" value="THIOSULFATE SULFURTRANSFERASE/RHODANESE-LIKE DOMAIN-CONTAINING PROTEIN 2"/>
    <property type="match status" value="1"/>
</dbReference>
<dbReference type="Pfam" id="PF00581">
    <property type="entry name" value="Rhodanese"/>
    <property type="match status" value="1"/>
</dbReference>
<dbReference type="Pfam" id="PF12368">
    <property type="entry name" value="Rhodanese_C"/>
    <property type="match status" value="1"/>
</dbReference>
<dbReference type="Pfam" id="PF17773">
    <property type="entry name" value="UPF0176_N"/>
    <property type="match status" value="1"/>
</dbReference>
<dbReference type="SMART" id="SM00450">
    <property type="entry name" value="RHOD"/>
    <property type="match status" value="1"/>
</dbReference>
<dbReference type="SUPFAM" id="SSF52821">
    <property type="entry name" value="Rhodanese/Cell cycle control phosphatase"/>
    <property type="match status" value="1"/>
</dbReference>
<dbReference type="PROSITE" id="PS50206">
    <property type="entry name" value="RHODANESE_3"/>
    <property type="match status" value="1"/>
</dbReference>